<feature type="chain" id="PRO_1000133552" description="Small ribosomal subunit protein bS6">
    <location>
        <begin position="1"/>
        <end position="127"/>
    </location>
</feature>
<feature type="region of interest" description="Disordered" evidence="2">
    <location>
        <begin position="106"/>
        <end position="127"/>
    </location>
</feature>
<feature type="compositionally biased region" description="Basic and acidic residues" evidence="2">
    <location>
        <begin position="106"/>
        <end position="117"/>
    </location>
</feature>
<feature type="compositionally biased region" description="Acidic residues" evidence="2">
    <location>
        <begin position="118"/>
        <end position="127"/>
    </location>
</feature>
<proteinExistence type="inferred from homology"/>
<keyword id="KW-0687">Ribonucleoprotein</keyword>
<keyword id="KW-0689">Ribosomal protein</keyword>
<keyword id="KW-0694">RNA-binding</keyword>
<keyword id="KW-0699">rRNA-binding</keyword>
<protein>
    <recommendedName>
        <fullName evidence="1">Small ribosomal subunit protein bS6</fullName>
    </recommendedName>
    <alternativeName>
        <fullName evidence="3">30S ribosomal protein S6</fullName>
    </alternativeName>
</protein>
<organism>
    <name type="scientific">Thermotoga neapolitana (strain ATCC 49049 / DSM 4359 / NBRC 107923 / NS-E)</name>
    <dbReference type="NCBI Taxonomy" id="309803"/>
    <lineage>
        <taxon>Bacteria</taxon>
        <taxon>Thermotogati</taxon>
        <taxon>Thermotogota</taxon>
        <taxon>Thermotogae</taxon>
        <taxon>Thermotogales</taxon>
        <taxon>Thermotogaceae</taxon>
        <taxon>Thermotoga</taxon>
    </lineage>
</organism>
<sequence length="127" mass="15235">MAYVKERIYESMFIIAPNVPEEEREKLVERVKGIIEERVKGKIDKVERMGMRKFAYEIKKFSEGDYTVIYFRCDGQHLQELENFYRITPEIIRWQTFRRFDLEKKERKAQSEKKEAEVSEGEGGTEA</sequence>
<gene>
    <name evidence="1" type="primary">rpsF</name>
    <name type="ordered locus">CTN_0059</name>
</gene>
<comment type="function">
    <text evidence="1">Binds together with bS18 to 16S ribosomal RNA.</text>
</comment>
<comment type="similarity">
    <text evidence="1">Belongs to the bacterial ribosomal protein bS6 family.</text>
</comment>
<accession>B9KB39</accession>
<evidence type="ECO:0000255" key="1">
    <source>
        <dbReference type="HAMAP-Rule" id="MF_00360"/>
    </source>
</evidence>
<evidence type="ECO:0000256" key="2">
    <source>
        <dbReference type="SAM" id="MobiDB-lite"/>
    </source>
</evidence>
<evidence type="ECO:0000305" key="3"/>
<dbReference type="EMBL" id="CP000916">
    <property type="protein sequence ID" value="ACM22235.1"/>
    <property type="molecule type" value="Genomic_DNA"/>
</dbReference>
<dbReference type="RefSeq" id="WP_012644945.1">
    <property type="nucleotide sequence ID" value="NC_011978.1"/>
</dbReference>
<dbReference type="SMR" id="B9KB39"/>
<dbReference type="STRING" id="309803.CTN_0059"/>
<dbReference type="KEGG" id="tna:CTN_0059"/>
<dbReference type="eggNOG" id="COG0360">
    <property type="taxonomic scope" value="Bacteria"/>
</dbReference>
<dbReference type="HOGENOM" id="CLU_113441_5_0_0"/>
<dbReference type="Proteomes" id="UP000000445">
    <property type="component" value="Chromosome"/>
</dbReference>
<dbReference type="GO" id="GO:0005737">
    <property type="term" value="C:cytoplasm"/>
    <property type="evidence" value="ECO:0007669"/>
    <property type="project" value="UniProtKB-ARBA"/>
</dbReference>
<dbReference type="GO" id="GO:1990904">
    <property type="term" value="C:ribonucleoprotein complex"/>
    <property type="evidence" value="ECO:0007669"/>
    <property type="project" value="UniProtKB-KW"/>
</dbReference>
<dbReference type="GO" id="GO:0005840">
    <property type="term" value="C:ribosome"/>
    <property type="evidence" value="ECO:0007669"/>
    <property type="project" value="UniProtKB-KW"/>
</dbReference>
<dbReference type="GO" id="GO:0070181">
    <property type="term" value="F:small ribosomal subunit rRNA binding"/>
    <property type="evidence" value="ECO:0007669"/>
    <property type="project" value="TreeGrafter"/>
</dbReference>
<dbReference type="GO" id="GO:0003735">
    <property type="term" value="F:structural constituent of ribosome"/>
    <property type="evidence" value="ECO:0007669"/>
    <property type="project" value="InterPro"/>
</dbReference>
<dbReference type="GO" id="GO:0006412">
    <property type="term" value="P:translation"/>
    <property type="evidence" value="ECO:0007669"/>
    <property type="project" value="UniProtKB-UniRule"/>
</dbReference>
<dbReference type="CDD" id="cd00473">
    <property type="entry name" value="bS6"/>
    <property type="match status" value="1"/>
</dbReference>
<dbReference type="Gene3D" id="3.30.70.60">
    <property type="match status" value="1"/>
</dbReference>
<dbReference type="HAMAP" id="MF_00360">
    <property type="entry name" value="Ribosomal_bS6"/>
    <property type="match status" value="1"/>
</dbReference>
<dbReference type="InterPro" id="IPR000529">
    <property type="entry name" value="Ribosomal_bS6"/>
</dbReference>
<dbReference type="InterPro" id="IPR035980">
    <property type="entry name" value="Ribosomal_bS6_sf"/>
</dbReference>
<dbReference type="InterPro" id="IPR020814">
    <property type="entry name" value="Ribosomal_S6_plastid/chlpt"/>
</dbReference>
<dbReference type="InterPro" id="IPR014717">
    <property type="entry name" value="Transl_elong_EF1B/ribsomal_bS6"/>
</dbReference>
<dbReference type="NCBIfam" id="TIGR00166">
    <property type="entry name" value="S6"/>
    <property type="match status" value="1"/>
</dbReference>
<dbReference type="PANTHER" id="PTHR21011">
    <property type="entry name" value="MITOCHONDRIAL 28S RIBOSOMAL PROTEIN S6"/>
    <property type="match status" value="1"/>
</dbReference>
<dbReference type="PANTHER" id="PTHR21011:SF1">
    <property type="entry name" value="SMALL RIBOSOMAL SUBUNIT PROTEIN BS6M"/>
    <property type="match status" value="1"/>
</dbReference>
<dbReference type="Pfam" id="PF01250">
    <property type="entry name" value="Ribosomal_S6"/>
    <property type="match status" value="1"/>
</dbReference>
<dbReference type="SUPFAM" id="SSF54995">
    <property type="entry name" value="Ribosomal protein S6"/>
    <property type="match status" value="1"/>
</dbReference>
<reference key="1">
    <citation type="submission" date="2007-11" db="EMBL/GenBank/DDBJ databases">
        <title>The genome sequence of the hyperthermophilic bacterium Thermotoga neapolitana.</title>
        <authorList>
            <person name="Lim S.K."/>
            <person name="Kim J.S."/>
            <person name="Cha S.H."/>
            <person name="Park B.C."/>
            <person name="Lee D.S."/>
            <person name="Tae H.S."/>
            <person name="Kim S.-J."/>
            <person name="Kim J.J."/>
            <person name="Park K.J."/>
            <person name="Lee S.Y."/>
        </authorList>
    </citation>
    <scope>NUCLEOTIDE SEQUENCE [LARGE SCALE GENOMIC DNA]</scope>
    <source>
        <strain>ATCC 49049 / DSM 4359 / NBRC 107923 / NS-E</strain>
    </source>
</reference>
<name>RS6_THENN</name>